<gene>
    <name evidence="1" type="primary">eis</name>
    <name type="ordered locus">JTY_2426</name>
</gene>
<dbReference type="EC" id="2.3.1.-" evidence="1"/>
<dbReference type="EMBL" id="AP010918">
    <property type="protein sequence ID" value="BAH26710.1"/>
    <property type="status" value="ALT_INIT"/>
    <property type="molecule type" value="Genomic_DNA"/>
</dbReference>
<dbReference type="SMR" id="C1AQY1"/>
<dbReference type="KEGG" id="mbt:JTY_2426"/>
<dbReference type="HOGENOM" id="CLU_050659_0_0_11"/>
<dbReference type="GO" id="GO:0097691">
    <property type="term" value="C:bacterial extracellular vesicle"/>
    <property type="evidence" value="ECO:0007669"/>
    <property type="project" value="UniProtKB-SubCell"/>
</dbReference>
<dbReference type="GO" id="GO:0044161">
    <property type="term" value="C:host cell cytoplasmic vesicle"/>
    <property type="evidence" value="ECO:0007669"/>
    <property type="project" value="UniProtKB-SubCell"/>
</dbReference>
<dbReference type="GO" id="GO:0043655">
    <property type="term" value="C:host extracellular space"/>
    <property type="evidence" value="ECO:0007669"/>
    <property type="project" value="UniProtKB-SubCell"/>
</dbReference>
<dbReference type="GO" id="GO:0034069">
    <property type="term" value="F:aminoglycoside N-acetyltransferase activity"/>
    <property type="evidence" value="ECO:0007669"/>
    <property type="project" value="TreeGrafter"/>
</dbReference>
<dbReference type="GO" id="GO:0061733">
    <property type="term" value="F:protein-lysine-acetyltransferase activity"/>
    <property type="evidence" value="ECO:0007669"/>
    <property type="project" value="RHEA"/>
</dbReference>
<dbReference type="GO" id="GO:0030649">
    <property type="term" value="P:aminoglycoside antibiotic catabolic process"/>
    <property type="evidence" value="ECO:0007669"/>
    <property type="project" value="TreeGrafter"/>
</dbReference>
<dbReference type="CDD" id="cd04301">
    <property type="entry name" value="NAT_SF"/>
    <property type="match status" value="1"/>
</dbReference>
<dbReference type="FunFam" id="3.30.1050.10:FF:000008">
    <property type="entry name" value="N-acetyltransferase Eis"/>
    <property type="match status" value="1"/>
</dbReference>
<dbReference type="FunFam" id="3.40.630.30:FF:000112">
    <property type="entry name" value="N-acetyltransferase Eis"/>
    <property type="match status" value="1"/>
</dbReference>
<dbReference type="Gene3D" id="3.40.630.30">
    <property type="match status" value="2"/>
</dbReference>
<dbReference type="Gene3D" id="3.30.1050.10">
    <property type="entry name" value="SCP2 sterol-binding domain"/>
    <property type="match status" value="1"/>
</dbReference>
<dbReference type="HAMAP" id="MF_01812">
    <property type="entry name" value="Eis"/>
    <property type="match status" value="1"/>
</dbReference>
<dbReference type="InterPro" id="IPR041380">
    <property type="entry name" value="Acetyltransf_17"/>
</dbReference>
<dbReference type="InterPro" id="IPR051554">
    <property type="entry name" value="Acetyltransferase_Eis"/>
</dbReference>
<dbReference type="InterPro" id="IPR016181">
    <property type="entry name" value="Acyl_CoA_acyltransferase"/>
</dbReference>
<dbReference type="InterPro" id="IPR025559">
    <property type="entry name" value="Eis_dom"/>
</dbReference>
<dbReference type="InterPro" id="IPR000182">
    <property type="entry name" value="GNAT_dom"/>
</dbReference>
<dbReference type="InterPro" id="IPR022902">
    <property type="entry name" value="NAcTrfase_Eis"/>
</dbReference>
<dbReference type="InterPro" id="IPR036527">
    <property type="entry name" value="SCP2_sterol-bd_dom_sf"/>
</dbReference>
<dbReference type="NCBIfam" id="NF002364">
    <property type="entry name" value="PRK01346.1-1"/>
    <property type="match status" value="1"/>
</dbReference>
<dbReference type="NCBIfam" id="NF002367">
    <property type="entry name" value="PRK01346.1-4"/>
    <property type="match status" value="1"/>
</dbReference>
<dbReference type="PANTHER" id="PTHR37817">
    <property type="entry name" value="N-ACETYLTRANSFERASE EIS"/>
    <property type="match status" value="1"/>
</dbReference>
<dbReference type="PANTHER" id="PTHR37817:SF1">
    <property type="entry name" value="N-ACETYLTRANSFERASE EIS"/>
    <property type="match status" value="1"/>
</dbReference>
<dbReference type="Pfam" id="PF17668">
    <property type="entry name" value="Acetyltransf_17"/>
    <property type="match status" value="1"/>
</dbReference>
<dbReference type="Pfam" id="PF13527">
    <property type="entry name" value="Acetyltransf_9"/>
    <property type="match status" value="1"/>
</dbReference>
<dbReference type="Pfam" id="PF13530">
    <property type="entry name" value="SCP2_2"/>
    <property type="match status" value="1"/>
</dbReference>
<dbReference type="SUPFAM" id="SSF55729">
    <property type="entry name" value="Acyl-CoA N-acyltransferases (Nat)"/>
    <property type="match status" value="1"/>
</dbReference>
<dbReference type="SUPFAM" id="SSF55718">
    <property type="entry name" value="SCP-like"/>
    <property type="match status" value="1"/>
</dbReference>
<dbReference type="PROSITE" id="PS51186">
    <property type="entry name" value="GNAT"/>
    <property type="match status" value="1"/>
</dbReference>
<accession>C1AQY1</accession>
<comment type="function">
    <text evidence="1">Effector that is released into the host cell and affects host immune responses. Acts as an acetyltransferase that acetylates lysine residues of host proteins.</text>
</comment>
<comment type="catalytic activity">
    <reaction evidence="1">
        <text>L-lysyl-[protein] + acetyl-CoA = N(6)-acetyl-L-lysyl-[protein] + CoA + H(+)</text>
        <dbReference type="Rhea" id="RHEA:45948"/>
        <dbReference type="Rhea" id="RHEA-COMP:9752"/>
        <dbReference type="Rhea" id="RHEA-COMP:10731"/>
        <dbReference type="ChEBI" id="CHEBI:15378"/>
        <dbReference type="ChEBI" id="CHEBI:29969"/>
        <dbReference type="ChEBI" id="CHEBI:57287"/>
        <dbReference type="ChEBI" id="CHEBI:57288"/>
        <dbReference type="ChEBI" id="CHEBI:61930"/>
    </reaction>
</comment>
<comment type="subunit">
    <text evidence="1">Homohexamer; trimer of dimers.</text>
</comment>
<comment type="subcellular location">
    <subcellularLocation>
        <location evidence="1">Secreted</location>
    </subcellularLocation>
    <subcellularLocation>
        <location evidence="1">Host cytoplasmic vesicle</location>
        <location evidence="1">Host phagosome</location>
    </subcellularLocation>
    <subcellularLocation>
        <location evidence="1">Extracellular vesicle</location>
        <location evidence="1">Bacterial extracellular vesicle</location>
    </subcellularLocation>
    <subcellularLocation>
        <location evidence="1">Host extracellular space</location>
    </subcellularLocation>
</comment>
<comment type="similarity">
    <text evidence="1">Belongs to the acetyltransferase Eis family.</text>
</comment>
<comment type="sequence caution" evidence="2">
    <conflict type="erroneous initiation">
        <sequence resource="EMBL-CDS" id="BAH26710"/>
    </conflict>
    <text>Extended N-terminus.</text>
</comment>
<protein>
    <recommendedName>
        <fullName evidence="1">N-acetyltransferase Eis</fullName>
        <ecNumber evidence="1">2.3.1.-</ecNumber>
    </recommendedName>
    <alternativeName>
        <fullName evidence="1">Enhanced intracellular survival protein</fullName>
    </alternativeName>
    <alternativeName>
        <fullName evidence="1">Protein-lysine N-acetyltransferase</fullName>
    </alternativeName>
</protein>
<evidence type="ECO:0000255" key="1">
    <source>
        <dbReference type="HAMAP-Rule" id="MF_01812"/>
    </source>
</evidence>
<evidence type="ECO:0000305" key="2"/>
<proteinExistence type="inferred from homology"/>
<keyword id="KW-0012">Acyltransferase</keyword>
<keyword id="KW-1036">Host cytoplasmic vesicle</keyword>
<keyword id="KW-0964">Secreted</keyword>
<keyword id="KW-0808">Transferase</keyword>
<sequence length="402" mass="43804">MTVTLCSPTEDDWPGMFLLAAASFTDFIGPESATAWRTLVPTDGAVVVRDGAGPGSEVVGMALYMDLRLTVPGEVVLPTAGLSFVAVAPTHRRRGLLRAMCAELHRRIADSGYPVAALHASEGGIYGRFGYGPATTLHELTVDRRFARFHADAPGGGLGGSSVRLVRPTEHRGEFEAIYERWRQQVPGGLLRPQVLWDELLAECKAAPGGDRESFALLHPDGYALYRVDRTDLKLARVSELRAVTADAHCALWRALIGLDSMERISIITHPQDPLPHLLTDTRLARTTWRQDGLWLRIMNVPAALEARGYAHEVGEFSTVLEVSDGGRFALKIGDGRARCTPTDAAAEIEMDRDVLGSLYLGAHRASTLAAANRLRTKDSQLLRRLDAAFASDVPVQTAFEF</sequence>
<organism>
    <name type="scientific">Mycobacterium bovis (strain BCG / Tokyo 172 / ATCC 35737 / TMC 1019)</name>
    <dbReference type="NCBI Taxonomy" id="561275"/>
    <lineage>
        <taxon>Bacteria</taxon>
        <taxon>Bacillati</taxon>
        <taxon>Actinomycetota</taxon>
        <taxon>Actinomycetes</taxon>
        <taxon>Mycobacteriales</taxon>
        <taxon>Mycobacteriaceae</taxon>
        <taxon>Mycobacterium</taxon>
        <taxon>Mycobacterium tuberculosis complex</taxon>
    </lineage>
</organism>
<name>EIS_MYCBT</name>
<reference key="1">
    <citation type="journal article" date="2009" name="Vaccine">
        <title>Whole genome sequence analysis of Mycobacterium bovis bacillus Calmette-Guerin (BCG) Tokyo 172: a comparative study of BCG vaccine substrains.</title>
        <authorList>
            <person name="Seki M."/>
            <person name="Honda I."/>
            <person name="Fujita I."/>
            <person name="Yano I."/>
            <person name="Yamamoto S."/>
            <person name="Koyama A."/>
        </authorList>
    </citation>
    <scope>NUCLEOTIDE SEQUENCE [LARGE SCALE GENOMIC DNA]</scope>
    <source>
        <strain>BCG / Tokyo 172 / ATCC 35737 / TMC 1019</strain>
    </source>
</reference>
<feature type="chain" id="PRO_1000187720" description="N-acetyltransferase Eis">
    <location>
        <begin position="1"/>
        <end position="402"/>
    </location>
</feature>
<feature type="domain" description="N-acetyltransferase" evidence="1">
    <location>
        <begin position="3"/>
        <end position="154"/>
    </location>
</feature>
<feature type="active site" description="Proton donor" evidence="1">
    <location>
        <position position="126"/>
    </location>
</feature>
<feature type="active site" description="Proton acceptor; via carboxylate" evidence="1">
    <location>
        <position position="402"/>
    </location>
</feature>
<feature type="binding site" evidence="1">
    <location>
        <begin position="85"/>
        <end position="87"/>
    </location>
    <ligand>
        <name>acetyl-CoA</name>
        <dbReference type="ChEBI" id="CHEBI:57288"/>
    </ligand>
</feature>
<feature type="binding site" evidence="1">
    <location>
        <begin position="93"/>
        <end position="98"/>
    </location>
    <ligand>
        <name>acetyl-CoA</name>
        <dbReference type="ChEBI" id="CHEBI:57288"/>
    </ligand>
</feature>
<feature type="binding site" evidence="1">
    <location>
        <begin position="121"/>
        <end position="122"/>
    </location>
    <ligand>
        <name>acetyl-CoA</name>
        <dbReference type="ChEBI" id="CHEBI:57288"/>
    </ligand>
</feature>